<comment type="subcellular location">
    <subcellularLocation>
        <location>Plastid</location>
        <location>Chloroplast</location>
    </subcellularLocation>
</comment>
<comment type="RNA editing">
    <location>
        <position position="48" evidence="2"/>
    </location>
</comment>
<comment type="similarity">
    <text evidence="1">Belongs to the bacterial ribosomal protein bL33 family.</text>
</comment>
<geneLocation type="chloroplast"/>
<organism>
    <name type="scientific">Adiantum capillus-veneris</name>
    <name type="common">Maidenhair fern</name>
    <dbReference type="NCBI Taxonomy" id="13818"/>
    <lineage>
        <taxon>Eukaryota</taxon>
        <taxon>Viridiplantae</taxon>
        <taxon>Streptophyta</taxon>
        <taxon>Embryophyta</taxon>
        <taxon>Tracheophyta</taxon>
        <taxon>Polypodiopsida</taxon>
        <taxon>Polypodiidae</taxon>
        <taxon>Polypodiales</taxon>
        <taxon>Pteridineae</taxon>
        <taxon>Pteridaceae</taxon>
        <taxon>Vittarioideae</taxon>
        <taxon>Adiantum</taxon>
    </lineage>
</organism>
<proteinExistence type="evidence at transcript level"/>
<feature type="chain" id="PRO_0000170272" description="Large ribosomal subunit protein bL33c">
    <location>
        <begin position="1"/>
        <end position="66"/>
    </location>
</feature>
<evidence type="ECO:0000255" key="1">
    <source>
        <dbReference type="HAMAP-Rule" id="MF_00294"/>
    </source>
</evidence>
<evidence type="ECO:0000269" key="2">
    <source>
    </source>
</evidence>
<evidence type="ECO:0000305" key="3"/>
<gene>
    <name evidence="1" type="primary">rpl33</name>
</gene>
<name>RK33_ADICA</name>
<protein>
    <recommendedName>
        <fullName evidence="1">Large ribosomal subunit protein bL33c</fullName>
    </recommendedName>
    <alternativeName>
        <fullName evidence="3">50S ribosomal protein L33, chloroplastic</fullName>
    </alternativeName>
</protein>
<keyword id="KW-0150">Chloroplast</keyword>
<keyword id="KW-0934">Plastid</keyword>
<keyword id="KW-0687">Ribonucleoprotein</keyword>
<keyword id="KW-0689">Ribosomal protein</keyword>
<keyword id="KW-0691">RNA editing</keyword>
<dbReference type="EMBL" id="AY178864">
    <property type="protein sequence ID" value="AAP29412.2"/>
    <property type="molecule type" value="Genomic_DNA"/>
</dbReference>
<dbReference type="RefSeq" id="NP_848081.1">
    <property type="nucleotide sequence ID" value="NC_004766.1"/>
</dbReference>
<dbReference type="GeneID" id="807463"/>
<dbReference type="GO" id="GO:0009507">
    <property type="term" value="C:chloroplast"/>
    <property type="evidence" value="ECO:0007669"/>
    <property type="project" value="UniProtKB-SubCell"/>
</dbReference>
<dbReference type="GO" id="GO:1990904">
    <property type="term" value="C:ribonucleoprotein complex"/>
    <property type="evidence" value="ECO:0007669"/>
    <property type="project" value="UniProtKB-KW"/>
</dbReference>
<dbReference type="GO" id="GO:0005840">
    <property type="term" value="C:ribosome"/>
    <property type="evidence" value="ECO:0007669"/>
    <property type="project" value="UniProtKB-KW"/>
</dbReference>
<dbReference type="GO" id="GO:0003735">
    <property type="term" value="F:structural constituent of ribosome"/>
    <property type="evidence" value="ECO:0007669"/>
    <property type="project" value="InterPro"/>
</dbReference>
<dbReference type="GO" id="GO:0006412">
    <property type="term" value="P:translation"/>
    <property type="evidence" value="ECO:0007669"/>
    <property type="project" value="UniProtKB-UniRule"/>
</dbReference>
<dbReference type="Gene3D" id="2.20.28.120">
    <property type="entry name" value="Ribosomal protein L33"/>
    <property type="match status" value="1"/>
</dbReference>
<dbReference type="HAMAP" id="MF_00294">
    <property type="entry name" value="Ribosomal_bL33"/>
    <property type="match status" value="1"/>
</dbReference>
<dbReference type="InterPro" id="IPR001705">
    <property type="entry name" value="Ribosomal_bL33"/>
</dbReference>
<dbReference type="InterPro" id="IPR018264">
    <property type="entry name" value="Ribosomal_bL33_CS"/>
</dbReference>
<dbReference type="InterPro" id="IPR038584">
    <property type="entry name" value="Ribosomal_bL33_sf"/>
</dbReference>
<dbReference type="InterPro" id="IPR011332">
    <property type="entry name" value="Ribosomal_zn-bd"/>
</dbReference>
<dbReference type="NCBIfam" id="NF001764">
    <property type="entry name" value="PRK00504.1"/>
    <property type="match status" value="1"/>
</dbReference>
<dbReference type="NCBIfam" id="NF001860">
    <property type="entry name" value="PRK00595.1"/>
    <property type="match status" value="1"/>
</dbReference>
<dbReference type="NCBIfam" id="TIGR01023">
    <property type="entry name" value="rpmG_bact"/>
    <property type="match status" value="1"/>
</dbReference>
<dbReference type="PANTHER" id="PTHR43168">
    <property type="entry name" value="50S RIBOSOMAL PROTEIN L33, CHLOROPLASTIC"/>
    <property type="match status" value="1"/>
</dbReference>
<dbReference type="PANTHER" id="PTHR43168:SF2">
    <property type="entry name" value="LARGE RIBOSOMAL SUBUNIT PROTEIN BL33C"/>
    <property type="match status" value="1"/>
</dbReference>
<dbReference type="Pfam" id="PF00471">
    <property type="entry name" value="Ribosomal_L33"/>
    <property type="match status" value="1"/>
</dbReference>
<dbReference type="SUPFAM" id="SSF57829">
    <property type="entry name" value="Zn-binding ribosomal proteins"/>
    <property type="match status" value="1"/>
</dbReference>
<dbReference type="PROSITE" id="PS00582">
    <property type="entry name" value="RIBOSOMAL_L33"/>
    <property type="match status" value="1"/>
</dbReference>
<reference key="1">
    <citation type="journal article" date="2003" name="DNA Res.">
        <title>Complete nucleotide sequence of the chloroplast genome from a leptosporangiate fern, Adiantum capillus-veneris L.</title>
        <authorList>
            <person name="Wolf P.G."/>
            <person name="Rowe C.A."/>
            <person name="Sinclair R.B."/>
            <person name="Hasebe M."/>
        </authorList>
    </citation>
    <scope>NUCLEOTIDE SEQUENCE [LARGE SCALE GENOMIC DNA]</scope>
</reference>
<reference key="2">
    <citation type="journal article" date="2004" name="Gene">
        <title>High levels of RNA editing in a vascular plant chloroplast genome: analysis of transcripts from the fern Adiantum capillus-veneris.</title>
        <authorList>
            <person name="Wolf P.G."/>
            <person name="Rowe C.A."/>
            <person name="Hasebe M."/>
        </authorList>
    </citation>
    <scope>NUCLEOTIDE SEQUENCE [GENOMIC DNA]</scope>
    <scope>RNA EDITING</scope>
    <source>
        <tissue>Frond</tissue>
    </source>
</reference>
<accession>Q85FK1</accession>
<sequence length="66" mass="7651">MANTKDARVTIALECTSCIQRKTSGKSAGLCRYTTRKNRRNTPARLELEKYCFHCHKHTLHKESKK</sequence>